<dbReference type="EMBL" id="CP000394">
    <property type="protein sequence ID" value="ABI62766.1"/>
    <property type="molecule type" value="Genomic_DNA"/>
</dbReference>
<dbReference type="RefSeq" id="WP_011632568.1">
    <property type="nucleotide sequence ID" value="NC_008343.2"/>
</dbReference>
<dbReference type="SMR" id="Q0BQY6"/>
<dbReference type="STRING" id="391165.GbCGDNIH1_1868"/>
<dbReference type="GeneID" id="69746058"/>
<dbReference type="KEGG" id="gbe:GbCGDNIH1_1868"/>
<dbReference type="eggNOG" id="COG0636">
    <property type="taxonomic scope" value="Bacteria"/>
</dbReference>
<dbReference type="HOGENOM" id="CLU_148047_4_1_5"/>
<dbReference type="OrthoDB" id="9811093at2"/>
<dbReference type="Proteomes" id="UP000001963">
    <property type="component" value="Chromosome"/>
</dbReference>
<dbReference type="GO" id="GO:0005886">
    <property type="term" value="C:plasma membrane"/>
    <property type="evidence" value="ECO:0007669"/>
    <property type="project" value="UniProtKB-SubCell"/>
</dbReference>
<dbReference type="GO" id="GO:0045259">
    <property type="term" value="C:proton-transporting ATP synthase complex"/>
    <property type="evidence" value="ECO:0007669"/>
    <property type="project" value="UniProtKB-KW"/>
</dbReference>
<dbReference type="GO" id="GO:0033177">
    <property type="term" value="C:proton-transporting two-sector ATPase complex, proton-transporting domain"/>
    <property type="evidence" value="ECO:0007669"/>
    <property type="project" value="InterPro"/>
</dbReference>
<dbReference type="GO" id="GO:0008289">
    <property type="term" value="F:lipid binding"/>
    <property type="evidence" value="ECO:0007669"/>
    <property type="project" value="UniProtKB-KW"/>
</dbReference>
<dbReference type="GO" id="GO:0046933">
    <property type="term" value="F:proton-transporting ATP synthase activity, rotational mechanism"/>
    <property type="evidence" value="ECO:0007669"/>
    <property type="project" value="UniProtKB-UniRule"/>
</dbReference>
<dbReference type="CDD" id="cd18182">
    <property type="entry name" value="ATP-synt_Fo_c_ATP5G3"/>
    <property type="match status" value="1"/>
</dbReference>
<dbReference type="FunFam" id="1.20.20.10:FF:000008">
    <property type="entry name" value="ATPase subunit 9 homolog"/>
    <property type="match status" value="1"/>
</dbReference>
<dbReference type="Gene3D" id="1.20.20.10">
    <property type="entry name" value="F1F0 ATP synthase subunit C"/>
    <property type="match status" value="1"/>
</dbReference>
<dbReference type="HAMAP" id="MF_01396">
    <property type="entry name" value="ATP_synth_c_bact"/>
    <property type="match status" value="1"/>
</dbReference>
<dbReference type="InterPro" id="IPR000454">
    <property type="entry name" value="ATP_synth_F0_csu"/>
</dbReference>
<dbReference type="InterPro" id="IPR020537">
    <property type="entry name" value="ATP_synth_F0_csu_DDCD_BS"/>
</dbReference>
<dbReference type="InterPro" id="IPR038662">
    <property type="entry name" value="ATP_synth_F0_csu_sf"/>
</dbReference>
<dbReference type="InterPro" id="IPR002379">
    <property type="entry name" value="ATPase_proteolipid_c-like_dom"/>
</dbReference>
<dbReference type="InterPro" id="IPR035921">
    <property type="entry name" value="F/V-ATP_Csub_sf"/>
</dbReference>
<dbReference type="PANTHER" id="PTHR10031">
    <property type="entry name" value="ATP SYNTHASE LIPID-BINDING PROTEIN, MITOCHONDRIAL"/>
    <property type="match status" value="1"/>
</dbReference>
<dbReference type="PANTHER" id="PTHR10031:SF0">
    <property type="entry name" value="ATPASE PROTEIN 9"/>
    <property type="match status" value="1"/>
</dbReference>
<dbReference type="Pfam" id="PF00137">
    <property type="entry name" value="ATP-synt_C"/>
    <property type="match status" value="1"/>
</dbReference>
<dbReference type="PRINTS" id="PR00124">
    <property type="entry name" value="ATPASEC"/>
</dbReference>
<dbReference type="SUPFAM" id="SSF81333">
    <property type="entry name" value="F1F0 ATP synthase subunit C"/>
    <property type="match status" value="1"/>
</dbReference>
<dbReference type="PROSITE" id="PS00605">
    <property type="entry name" value="ATPASE_C"/>
    <property type="match status" value="1"/>
</dbReference>
<accession>Q0BQY6</accession>
<proteinExistence type="inferred from homology"/>
<feature type="chain" id="PRO_0000365890" description="ATP synthase subunit c">
    <location>
        <begin position="1"/>
        <end position="74"/>
    </location>
</feature>
<feature type="transmembrane region" description="Helical" evidence="1">
    <location>
        <begin position="13"/>
        <end position="33"/>
    </location>
</feature>
<feature type="transmembrane region" description="Helical" evidence="1">
    <location>
        <begin position="51"/>
        <end position="71"/>
    </location>
</feature>
<feature type="site" description="Reversibly protonated during proton transport" evidence="1">
    <location>
        <position position="58"/>
    </location>
</feature>
<name>ATPL_GRABC</name>
<sequence length="74" mass="7361">MDVAAAKALGAGISVIALAGVGLGIGNIFASLIASVARNPSSRDQVFSIGILGFALTEAVALFALLIAFLILFA</sequence>
<organism>
    <name type="scientific">Granulibacter bethesdensis (strain ATCC BAA-1260 / CGDNIH1)</name>
    <dbReference type="NCBI Taxonomy" id="391165"/>
    <lineage>
        <taxon>Bacteria</taxon>
        <taxon>Pseudomonadati</taxon>
        <taxon>Pseudomonadota</taxon>
        <taxon>Alphaproteobacteria</taxon>
        <taxon>Acetobacterales</taxon>
        <taxon>Acetobacteraceae</taxon>
        <taxon>Granulibacter</taxon>
    </lineage>
</organism>
<evidence type="ECO:0000255" key="1">
    <source>
        <dbReference type="HAMAP-Rule" id="MF_01396"/>
    </source>
</evidence>
<comment type="function">
    <text evidence="1">F(1)F(0) ATP synthase produces ATP from ADP in the presence of a proton or sodium gradient. F-type ATPases consist of two structural domains, F(1) containing the extramembraneous catalytic core and F(0) containing the membrane proton channel, linked together by a central stalk and a peripheral stalk. During catalysis, ATP synthesis in the catalytic domain of F(1) is coupled via a rotary mechanism of the central stalk subunits to proton translocation.</text>
</comment>
<comment type="function">
    <text evidence="1">Key component of the F(0) channel; it plays a direct role in translocation across the membrane. A homomeric c-ring of between 10-14 subunits forms the central stalk rotor element with the F(1) delta and epsilon subunits.</text>
</comment>
<comment type="subunit">
    <text evidence="1">F-type ATPases have 2 components, F(1) - the catalytic core - and F(0) - the membrane proton channel. F(1) has five subunits: alpha(3), beta(3), gamma(1), delta(1), epsilon(1). F(0) has three main subunits: a(1), b(2) and c(10-14). The alpha and beta chains form an alternating ring which encloses part of the gamma chain. F(1) is attached to F(0) by a central stalk formed by the gamma and epsilon chains, while a peripheral stalk is formed by the delta and b chains.</text>
</comment>
<comment type="subcellular location">
    <subcellularLocation>
        <location evidence="1">Cell inner membrane</location>
        <topology evidence="1">Multi-pass membrane protein</topology>
    </subcellularLocation>
</comment>
<comment type="similarity">
    <text evidence="1">Belongs to the ATPase C chain family.</text>
</comment>
<keyword id="KW-0066">ATP synthesis</keyword>
<keyword id="KW-0997">Cell inner membrane</keyword>
<keyword id="KW-1003">Cell membrane</keyword>
<keyword id="KW-0138">CF(0)</keyword>
<keyword id="KW-0375">Hydrogen ion transport</keyword>
<keyword id="KW-0406">Ion transport</keyword>
<keyword id="KW-0446">Lipid-binding</keyword>
<keyword id="KW-0472">Membrane</keyword>
<keyword id="KW-1185">Reference proteome</keyword>
<keyword id="KW-0812">Transmembrane</keyword>
<keyword id="KW-1133">Transmembrane helix</keyword>
<keyword id="KW-0813">Transport</keyword>
<gene>
    <name evidence="1" type="primary">atpE</name>
    <name type="ordered locus">GbCGDNIH1_1868</name>
</gene>
<protein>
    <recommendedName>
        <fullName evidence="1">ATP synthase subunit c</fullName>
    </recommendedName>
    <alternativeName>
        <fullName evidence="1">ATP synthase F(0) sector subunit c</fullName>
    </alternativeName>
    <alternativeName>
        <fullName evidence="1">F-type ATPase subunit c</fullName>
        <shortName evidence="1">F-ATPase subunit c</shortName>
    </alternativeName>
    <alternativeName>
        <fullName evidence="1">Lipid-binding protein</fullName>
    </alternativeName>
</protein>
<reference key="1">
    <citation type="journal article" date="2007" name="J. Bacteriol.">
        <title>Genome sequence analysis of the emerging human pathogenic acetic acid bacterium Granulibacter bethesdensis.</title>
        <authorList>
            <person name="Greenberg D.E."/>
            <person name="Porcella S.F."/>
            <person name="Zelazny A.M."/>
            <person name="Virtaneva K."/>
            <person name="Sturdevant D.E."/>
            <person name="Kupko J.J. III"/>
            <person name="Barbian K.D."/>
            <person name="Babar A."/>
            <person name="Dorward D.W."/>
            <person name="Holland S.M."/>
        </authorList>
    </citation>
    <scope>NUCLEOTIDE SEQUENCE [LARGE SCALE GENOMIC DNA]</scope>
    <source>
        <strain>ATCC BAA-1260 / CGDNIH1</strain>
    </source>
</reference>